<sequence length="433" mass="49474">MSAKKLFIQTLGCAMNVRDSEHMIAELTQKENYALTEDIKEADLILINTCSVREKPVHKLFSEVGGFEKVKKEGAKIGVCGCTASHLGNEIFKRAPYVDFVLGARNISKITQAIKTPKFMGVDIDYDESEFAFADFRNSIYKSYINISIGCDKHCTYCIVPHTRGDEISIPFNIIYKEAQKAIEKGAKEIFLLGQNVNNYGKRFRNEHKKMDFSDLLEELSTIEGLERIRFTSPHPLHMDDKFLEVFANNPKVCKSMHMPLQSGSSEILKAMKRGYTKEWYLNRALKLRELCPNVSISTDIIVAFPGESEKDFEETVDVLEKVRFEQIFSFKYSKRPLTKAATMPNQIDEEIASRRLSTLQNRHSEILDKIVKKQENKTFKVLFEELRAGNSIAGRTDNNFLVQVEGSEELLGQFKEVKITNAKRMVLYGEIV</sequence>
<protein>
    <recommendedName>
        <fullName evidence="1">tRNA-2-methylthio-N(6)-dimethylallyladenosine synthase</fullName>
        <ecNumber evidence="1">2.8.4.3</ecNumber>
    </recommendedName>
    <alternativeName>
        <fullName evidence="1">(Dimethylallyl)adenosine tRNA methylthiotransferase MiaB</fullName>
    </alternativeName>
    <alternativeName>
        <fullName evidence="1">tRNA-i(6)A37 methylthiotransferase</fullName>
    </alternativeName>
</protein>
<dbReference type="EC" id="2.8.4.3" evidence="1"/>
<dbReference type="EMBL" id="CP000538">
    <property type="protein sequence ID" value="EAQ73006.1"/>
    <property type="molecule type" value="Genomic_DNA"/>
</dbReference>
<dbReference type="RefSeq" id="WP_002858634.1">
    <property type="nucleotide sequence ID" value="NC_008787.1"/>
</dbReference>
<dbReference type="SMR" id="A1VYH4"/>
<dbReference type="KEGG" id="cjj:CJJ81176_0483"/>
<dbReference type="eggNOG" id="COG0621">
    <property type="taxonomic scope" value="Bacteria"/>
</dbReference>
<dbReference type="HOGENOM" id="CLU_018697_2_0_7"/>
<dbReference type="Proteomes" id="UP000000646">
    <property type="component" value="Chromosome"/>
</dbReference>
<dbReference type="GO" id="GO:0005829">
    <property type="term" value="C:cytosol"/>
    <property type="evidence" value="ECO:0007669"/>
    <property type="project" value="TreeGrafter"/>
</dbReference>
<dbReference type="GO" id="GO:0051539">
    <property type="term" value="F:4 iron, 4 sulfur cluster binding"/>
    <property type="evidence" value="ECO:0007669"/>
    <property type="project" value="UniProtKB-UniRule"/>
</dbReference>
<dbReference type="GO" id="GO:0046872">
    <property type="term" value="F:metal ion binding"/>
    <property type="evidence" value="ECO:0007669"/>
    <property type="project" value="UniProtKB-KW"/>
</dbReference>
<dbReference type="GO" id="GO:0035597">
    <property type="term" value="F:N6-isopentenyladenosine methylthiotransferase activity"/>
    <property type="evidence" value="ECO:0007669"/>
    <property type="project" value="TreeGrafter"/>
</dbReference>
<dbReference type="CDD" id="cd01335">
    <property type="entry name" value="Radical_SAM"/>
    <property type="match status" value="1"/>
</dbReference>
<dbReference type="FunFam" id="3.40.50.12160:FF:000003">
    <property type="entry name" value="CDK5 regulatory subunit-associated protein 1"/>
    <property type="match status" value="1"/>
</dbReference>
<dbReference type="FunFam" id="3.80.30.20:FF:000001">
    <property type="entry name" value="tRNA-2-methylthio-N(6)-dimethylallyladenosine synthase 2"/>
    <property type="match status" value="1"/>
</dbReference>
<dbReference type="Gene3D" id="3.40.50.12160">
    <property type="entry name" value="Methylthiotransferase, N-terminal domain"/>
    <property type="match status" value="1"/>
</dbReference>
<dbReference type="Gene3D" id="3.80.30.20">
    <property type="entry name" value="tm_1862 like domain"/>
    <property type="match status" value="1"/>
</dbReference>
<dbReference type="HAMAP" id="MF_01864">
    <property type="entry name" value="tRNA_metthiotr_MiaB"/>
    <property type="match status" value="1"/>
</dbReference>
<dbReference type="InterPro" id="IPR006638">
    <property type="entry name" value="Elp3/MiaA/NifB-like_rSAM"/>
</dbReference>
<dbReference type="InterPro" id="IPR005839">
    <property type="entry name" value="Methylthiotransferase"/>
</dbReference>
<dbReference type="InterPro" id="IPR020612">
    <property type="entry name" value="Methylthiotransferase_CS"/>
</dbReference>
<dbReference type="InterPro" id="IPR013848">
    <property type="entry name" value="Methylthiotransferase_N"/>
</dbReference>
<dbReference type="InterPro" id="IPR038135">
    <property type="entry name" value="Methylthiotransferase_N_sf"/>
</dbReference>
<dbReference type="InterPro" id="IPR006463">
    <property type="entry name" value="MiaB_methiolase"/>
</dbReference>
<dbReference type="InterPro" id="IPR007197">
    <property type="entry name" value="rSAM"/>
</dbReference>
<dbReference type="InterPro" id="IPR023404">
    <property type="entry name" value="rSAM_horseshoe"/>
</dbReference>
<dbReference type="InterPro" id="IPR002792">
    <property type="entry name" value="TRAM_dom"/>
</dbReference>
<dbReference type="NCBIfam" id="TIGR01574">
    <property type="entry name" value="miaB-methiolase"/>
    <property type="match status" value="1"/>
</dbReference>
<dbReference type="NCBIfam" id="TIGR00089">
    <property type="entry name" value="MiaB/RimO family radical SAM methylthiotransferase"/>
    <property type="match status" value="1"/>
</dbReference>
<dbReference type="PANTHER" id="PTHR43020">
    <property type="entry name" value="CDK5 REGULATORY SUBUNIT-ASSOCIATED PROTEIN 1"/>
    <property type="match status" value="1"/>
</dbReference>
<dbReference type="PANTHER" id="PTHR43020:SF2">
    <property type="entry name" value="MITOCHONDRIAL TRNA METHYLTHIOTRANSFERASE CDK5RAP1"/>
    <property type="match status" value="1"/>
</dbReference>
<dbReference type="Pfam" id="PF04055">
    <property type="entry name" value="Radical_SAM"/>
    <property type="match status" value="1"/>
</dbReference>
<dbReference type="Pfam" id="PF01938">
    <property type="entry name" value="TRAM"/>
    <property type="match status" value="1"/>
</dbReference>
<dbReference type="Pfam" id="PF00919">
    <property type="entry name" value="UPF0004"/>
    <property type="match status" value="1"/>
</dbReference>
<dbReference type="SFLD" id="SFLDF00273">
    <property type="entry name" value="(dimethylallyl)adenosine_tRNA"/>
    <property type="match status" value="1"/>
</dbReference>
<dbReference type="SFLD" id="SFLDG01082">
    <property type="entry name" value="B12-binding_domain_containing"/>
    <property type="match status" value="1"/>
</dbReference>
<dbReference type="SFLD" id="SFLDG01061">
    <property type="entry name" value="methylthiotransferase"/>
    <property type="match status" value="1"/>
</dbReference>
<dbReference type="SMART" id="SM00729">
    <property type="entry name" value="Elp3"/>
    <property type="match status" value="1"/>
</dbReference>
<dbReference type="SUPFAM" id="SSF102114">
    <property type="entry name" value="Radical SAM enzymes"/>
    <property type="match status" value="1"/>
</dbReference>
<dbReference type="PROSITE" id="PS51449">
    <property type="entry name" value="MTTASE_N"/>
    <property type="match status" value="1"/>
</dbReference>
<dbReference type="PROSITE" id="PS01278">
    <property type="entry name" value="MTTASE_RADICAL"/>
    <property type="match status" value="1"/>
</dbReference>
<dbReference type="PROSITE" id="PS51918">
    <property type="entry name" value="RADICAL_SAM"/>
    <property type="match status" value="1"/>
</dbReference>
<dbReference type="PROSITE" id="PS50926">
    <property type="entry name" value="TRAM"/>
    <property type="match status" value="1"/>
</dbReference>
<name>MIAB_CAMJJ</name>
<reference key="1">
    <citation type="submission" date="2006-12" db="EMBL/GenBank/DDBJ databases">
        <authorList>
            <person name="Fouts D.E."/>
            <person name="Nelson K.E."/>
            <person name="Sebastian Y."/>
        </authorList>
    </citation>
    <scope>NUCLEOTIDE SEQUENCE [LARGE SCALE GENOMIC DNA]</scope>
    <source>
        <strain>81-176</strain>
    </source>
</reference>
<accession>A1VYH4</accession>
<evidence type="ECO:0000255" key="1">
    <source>
        <dbReference type="HAMAP-Rule" id="MF_01864"/>
    </source>
</evidence>
<evidence type="ECO:0000255" key="2">
    <source>
        <dbReference type="PROSITE-ProRule" id="PRU01266"/>
    </source>
</evidence>
<keyword id="KW-0004">4Fe-4S</keyword>
<keyword id="KW-0963">Cytoplasm</keyword>
<keyword id="KW-0408">Iron</keyword>
<keyword id="KW-0411">Iron-sulfur</keyword>
<keyword id="KW-0479">Metal-binding</keyword>
<keyword id="KW-0949">S-adenosyl-L-methionine</keyword>
<keyword id="KW-0808">Transferase</keyword>
<keyword id="KW-0819">tRNA processing</keyword>
<proteinExistence type="inferred from homology"/>
<gene>
    <name evidence="1" type="primary">miaB</name>
    <name type="ordered locus">CJJ81176_0483</name>
</gene>
<feature type="chain" id="PRO_0000374201" description="tRNA-2-methylthio-N(6)-dimethylallyladenosine synthase">
    <location>
        <begin position="1"/>
        <end position="433"/>
    </location>
</feature>
<feature type="domain" description="MTTase N-terminal" evidence="1">
    <location>
        <begin position="4"/>
        <end position="119"/>
    </location>
</feature>
<feature type="domain" description="Radical SAM core" evidence="2">
    <location>
        <begin position="137"/>
        <end position="370"/>
    </location>
</feature>
<feature type="domain" description="TRAM" evidence="1">
    <location>
        <begin position="373"/>
        <end position="433"/>
    </location>
</feature>
<feature type="binding site" evidence="1">
    <location>
        <position position="13"/>
    </location>
    <ligand>
        <name>[4Fe-4S] cluster</name>
        <dbReference type="ChEBI" id="CHEBI:49883"/>
        <label>1</label>
    </ligand>
</feature>
<feature type="binding site" evidence="1">
    <location>
        <position position="50"/>
    </location>
    <ligand>
        <name>[4Fe-4S] cluster</name>
        <dbReference type="ChEBI" id="CHEBI:49883"/>
        <label>1</label>
    </ligand>
</feature>
<feature type="binding site" evidence="1">
    <location>
        <position position="82"/>
    </location>
    <ligand>
        <name>[4Fe-4S] cluster</name>
        <dbReference type="ChEBI" id="CHEBI:49883"/>
        <label>1</label>
    </ligand>
</feature>
<feature type="binding site" evidence="1">
    <location>
        <position position="151"/>
    </location>
    <ligand>
        <name>[4Fe-4S] cluster</name>
        <dbReference type="ChEBI" id="CHEBI:49883"/>
        <label>2</label>
        <note>4Fe-4S-S-AdoMet</note>
    </ligand>
</feature>
<feature type="binding site" evidence="1">
    <location>
        <position position="155"/>
    </location>
    <ligand>
        <name>[4Fe-4S] cluster</name>
        <dbReference type="ChEBI" id="CHEBI:49883"/>
        <label>2</label>
        <note>4Fe-4S-S-AdoMet</note>
    </ligand>
</feature>
<feature type="binding site" evidence="1">
    <location>
        <position position="158"/>
    </location>
    <ligand>
        <name>[4Fe-4S] cluster</name>
        <dbReference type="ChEBI" id="CHEBI:49883"/>
        <label>2</label>
        <note>4Fe-4S-S-AdoMet</note>
    </ligand>
</feature>
<comment type="function">
    <text evidence="1">Catalyzes the methylthiolation of N6-(dimethylallyl)adenosine (i(6)A), leading to the formation of 2-methylthio-N6-(dimethylallyl)adenosine (ms(2)i(6)A) at position 37 in tRNAs that read codons beginning with uridine.</text>
</comment>
<comment type="catalytic activity">
    <reaction evidence="1">
        <text>N(6)-dimethylallyladenosine(37) in tRNA + (sulfur carrier)-SH + AH2 + 2 S-adenosyl-L-methionine = 2-methylsulfanyl-N(6)-dimethylallyladenosine(37) in tRNA + (sulfur carrier)-H + 5'-deoxyadenosine + L-methionine + A + S-adenosyl-L-homocysteine + 2 H(+)</text>
        <dbReference type="Rhea" id="RHEA:37067"/>
        <dbReference type="Rhea" id="RHEA-COMP:10375"/>
        <dbReference type="Rhea" id="RHEA-COMP:10376"/>
        <dbReference type="Rhea" id="RHEA-COMP:14737"/>
        <dbReference type="Rhea" id="RHEA-COMP:14739"/>
        <dbReference type="ChEBI" id="CHEBI:13193"/>
        <dbReference type="ChEBI" id="CHEBI:15378"/>
        <dbReference type="ChEBI" id="CHEBI:17319"/>
        <dbReference type="ChEBI" id="CHEBI:17499"/>
        <dbReference type="ChEBI" id="CHEBI:29917"/>
        <dbReference type="ChEBI" id="CHEBI:57844"/>
        <dbReference type="ChEBI" id="CHEBI:57856"/>
        <dbReference type="ChEBI" id="CHEBI:59789"/>
        <dbReference type="ChEBI" id="CHEBI:64428"/>
        <dbReference type="ChEBI" id="CHEBI:74415"/>
        <dbReference type="ChEBI" id="CHEBI:74417"/>
        <dbReference type="EC" id="2.8.4.3"/>
    </reaction>
</comment>
<comment type="cofactor">
    <cofactor evidence="1">
        <name>[4Fe-4S] cluster</name>
        <dbReference type="ChEBI" id="CHEBI:49883"/>
    </cofactor>
    <text evidence="1">Binds 2 [4Fe-4S] clusters. One cluster is coordinated with 3 cysteines and an exchangeable S-adenosyl-L-methionine.</text>
</comment>
<comment type="subunit">
    <text evidence="1">Monomer.</text>
</comment>
<comment type="subcellular location">
    <subcellularLocation>
        <location evidence="1">Cytoplasm</location>
    </subcellularLocation>
</comment>
<comment type="similarity">
    <text evidence="1">Belongs to the methylthiotransferase family. MiaB subfamily.</text>
</comment>
<organism>
    <name type="scientific">Campylobacter jejuni subsp. jejuni serotype O:23/36 (strain 81-176)</name>
    <dbReference type="NCBI Taxonomy" id="354242"/>
    <lineage>
        <taxon>Bacteria</taxon>
        <taxon>Pseudomonadati</taxon>
        <taxon>Campylobacterota</taxon>
        <taxon>Epsilonproteobacteria</taxon>
        <taxon>Campylobacterales</taxon>
        <taxon>Campylobacteraceae</taxon>
        <taxon>Campylobacter</taxon>
    </lineage>
</organism>